<reference key="1">
    <citation type="journal article" date="1998" name="J. Pept. Sci.">
        <title>The maculatin peptides from the skin glands of the tree frog Litoria genimaculata. A comparison of the structures and antibacterial activities of maculatin 1.1 and caerin 1.1.</title>
        <authorList>
            <person name="Rozek T."/>
            <person name="Waugh R.J."/>
            <person name="Steinborner S.T."/>
            <person name="Bowie J.H."/>
            <person name="Tyler M.J."/>
            <person name="Wallace J.C."/>
        </authorList>
    </citation>
    <scope>PROTEIN SEQUENCE</scope>
    <scope>AMIDATION AT PHE-21</scope>
    <scope>MASS SPECTROMETRY</scope>
    <source>
        <tissue>Skin secretion</tissue>
    </source>
</reference>
<name>MCU11_RANGE</name>
<sequence length="21" mass="2147">GLFGVLAKVAAHVVPAIAEHF</sequence>
<proteinExistence type="evidence at protein level"/>
<accession>P82066</accession>
<organism>
    <name type="scientific">Ranoidea genimaculata</name>
    <name type="common">Brown-spotted tree frog</name>
    <name type="synonym">Litoria genimaculata</name>
    <dbReference type="NCBI Taxonomy" id="95132"/>
    <lineage>
        <taxon>Eukaryota</taxon>
        <taxon>Metazoa</taxon>
        <taxon>Chordata</taxon>
        <taxon>Craniata</taxon>
        <taxon>Vertebrata</taxon>
        <taxon>Euteleostomi</taxon>
        <taxon>Amphibia</taxon>
        <taxon>Batrachia</taxon>
        <taxon>Anura</taxon>
        <taxon>Neobatrachia</taxon>
        <taxon>Hyloidea</taxon>
        <taxon>Hylidae</taxon>
        <taxon>Pelodryadinae</taxon>
        <taxon>Ranoidea</taxon>
    </lineage>
</organism>
<protein>
    <recommendedName>
        <fullName>Maculatin-1.1</fullName>
    </recommendedName>
    <component>
        <recommendedName>
            <fullName>Maculatin-1.1.1</fullName>
        </recommendedName>
    </component>
</protein>
<keyword id="KW-0002">3D-structure</keyword>
<keyword id="KW-0027">Amidation</keyword>
<keyword id="KW-0878">Amphibian defense peptide</keyword>
<keyword id="KW-0044">Antibiotic</keyword>
<keyword id="KW-0929">Antimicrobial</keyword>
<keyword id="KW-0903">Direct protein sequencing</keyword>
<keyword id="KW-0964">Secreted</keyword>
<evidence type="ECO:0000269" key="1">
    <source>
    </source>
</evidence>
<evidence type="ECO:0007829" key="2">
    <source>
        <dbReference type="PDB" id="2MMJ"/>
    </source>
</evidence>
<dbReference type="PDB" id="2MMJ">
    <property type="method" value="NMR"/>
    <property type="chains" value="A=1-21"/>
</dbReference>
<dbReference type="PDB" id="2MN8">
    <property type="method" value="NMR"/>
    <property type="chains" value="A=1-21"/>
</dbReference>
<dbReference type="PDB" id="2MN9">
    <property type="method" value="NMR"/>
    <property type="chains" value="A=1-21"/>
</dbReference>
<dbReference type="PDBsum" id="2MMJ"/>
<dbReference type="PDBsum" id="2MN8"/>
<dbReference type="PDBsum" id="2MN9"/>
<dbReference type="SMR" id="P82066"/>
<dbReference type="TCDB" id="1.C.76.1.1">
    <property type="family name" value="the pore-forming maculatin peptide (maculatin) family"/>
</dbReference>
<dbReference type="EvolutionaryTrace" id="P82066"/>
<dbReference type="GO" id="GO:0005576">
    <property type="term" value="C:extracellular region"/>
    <property type="evidence" value="ECO:0007669"/>
    <property type="project" value="UniProtKB-SubCell"/>
</dbReference>
<dbReference type="GO" id="GO:0042742">
    <property type="term" value="P:defense response to bacterium"/>
    <property type="evidence" value="ECO:0007669"/>
    <property type="project" value="UniProtKB-KW"/>
</dbReference>
<feature type="peptide" id="PRO_0000010300" description="Maculatin-1.1">
    <location>
        <begin position="1"/>
        <end position="21"/>
    </location>
</feature>
<feature type="peptide" id="PRO_0000010301" description="Maculatin-1.1.1">
    <location>
        <begin position="3"/>
        <end position="21"/>
    </location>
</feature>
<feature type="modified residue" description="Phenylalanine amide" evidence="1">
    <location>
        <position position="21"/>
    </location>
</feature>
<feature type="helix" evidence="2">
    <location>
        <begin position="3"/>
        <end position="6"/>
    </location>
</feature>
<feature type="helix" evidence="2">
    <location>
        <begin position="7"/>
        <end position="9"/>
    </location>
</feature>
<feature type="helix" evidence="2">
    <location>
        <begin position="13"/>
        <end position="20"/>
    </location>
</feature>
<comment type="function">
    <text>Maculatin-1.1 shows significant antibacterial activity against Gram-positive bacteria, less against Gram-negative bacteria. Maculatin-1.1.1 is inactive.</text>
</comment>
<comment type="subcellular location">
    <subcellularLocation>
        <location>Secreted</location>
    </subcellularLocation>
</comment>
<comment type="tissue specificity">
    <text>Expressed by the skin dorsal glands.</text>
</comment>
<comment type="mass spectrometry" mass="2145.0" method="FAB" evidence="1">
    <molecule>Maculatin-1.1</molecule>
</comment>
<comment type="mass spectrometry" mass="1975.0" method="FAB" evidence="1">
    <molecule>Maculatin-1.1.1</molecule>
</comment>